<name>KAZD1_MOUSE</name>
<gene>
    <name type="primary">Kazald1</name>
    <name type="synonym">Bono1</name>
    <name type="synonym">Igfbprp10</name>
</gene>
<evidence type="ECO:0000255" key="1"/>
<evidence type="ECO:0000255" key="2">
    <source>
        <dbReference type="PROSITE-ProRule" id="PRU00114"/>
    </source>
</evidence>
<evidence type="ECO:0000255" key="3">
    <source>
        <dbReference type="PROSITE-ProRule" id="PRU00653"/>
    </source>
</evidence>
<evidence type="ECO:0000255" key="4">
    <source>
        <dbReference type="PROSITE-ProRule" id="PRU00798"/>
    </source>
</evidence>
<evidence type="ECO:0000256" key="5">
    <source>
        <dbReference type="SAM" id="MobiDB-lite"/>
    </source>
</evidence>
<evidence type="ECO:0000269" key="6">
    <source>
    </source>
</evidence>
<evidence type="ECO:0000269" key="7">
    <source>
    </source>
</evidence>
<evidence type="ECO:0000269" key="8">
    <source>
    </source>
</evidence>
<evidence type="ECO:0000305" key="9"/>
<comment type="function">
    <text evidence="7 8">Involved in the proliferation of osteoblasts during bone formation and bone regeneration. Promotes matrix assembly.</text>
</comment>
<comment type="subcellular location">
    <subcellularLocation>
        <location evidence="8">Secreted</location>
        <location evidence="8">Extracellular space</location>
        <location evidence="8">Extracellular matrix</location>
    </subcellularLocation>
</comment>
<comment type="tissue specificity">
    <text evidence="6 7">Highly expressed in the spleen. Moderately expressed in the skin, lung and urinary bladder. Weakly expressed in the brain, tongue, esophagus, stomach, large intestine, liver and bone. Expressed in osteoblastic cells during bone regeneration. Expressed in secretory osteoblasts in the tooth.</text>
</comment>
<comment type="developmental stage">
    <text evidence="6 8">At 15 dpc embryos, weakly expressed in osteoblasts within the distal area of the ossification center of the mid-shaft region of the ulna and the radius. At 16 dpc embryos highly expressed in mandible, maxilla, frontal bone and ossification regions of the nasal septum. At 17 dpc embryos expression is localized to developing mandibular and maxillar bones, the frontal bones and in the nasal capsule surrounding the nasopharynx. Expression throughout the developing mandibular bone is found in 15 dpc-17 dpc embryos. Present in periosteum of the humerus at 16.5 dpc (at protein level).</text>
</comment>
<comment type="induction">
    <text evidence="7">Up-regulated during the early phase of the bone regeneration. Up-regulated by BMP2 during osteoblast differentiation.</text>
</comment>
<protein>
    <recommendedName>
        <fullName>Kazal-type serine protease inhibitor domain-containing protein 1</fullName>
    </recommendedName>
    <alternativeName>
        <fullName>Bone and odontoblast-expressed protein 1</fullName>
    </alternativeName>
    <alternativeName>
        <fullName>Insulin-like growth factor-binding-related protein 10</fullName>
        <shortName>IGFBP-rP10</shortName>
        <shortName>IGFBP-related protein 10</shortName>
    </alternativeName>
    <alternativeName>
        <fullName>Insulin-like growth factor-binding-related protein 4</fullName>
    </alternativeName>
</protein>
<reference key="1">
    <citation type="journal article" date="2005" name="Science">
        <title>The transcriptional landscape of the mammalian genome.</title>
        <authorList>
            <person name="Carninci P."/>
            <person name="Kasukawa T."/>
            <person name="Katayama S."/>
            <person name="Gough J."/>
            <person name="Frith M.C."/>
            <person name="Maeda N."/>
            <person name="Oyama R."/>
            <person name="Ravasi T."/>
            <person name="Lenhard B."/>
            <person name="Wells C."/>
            <person name="Kodzius R."/>
            <person name="Shimokawa K."/>
            <person name="Bajic V.B."/>
            <person name="Brenner S.E."/>
            <person name="Batalov S."/>
            <person name="Forrest A.R."/>
            <person name="Zavolan M."/>
            <person name="Davis M.J."/>
            <person name="Wilming L.G."/>
            <person name="Aidinis V."/>
            <person name="Allen J.E."/>
            <person name="Ambesi-Impiombato A."/>
            <person name="Apweiler R."/>
            <person name="Aturaliya R.N."/>
            <person name="Bailey T.L."/>
            <person name="Bansal M."/>
            <person name="Baxter L."/>
            <person name="Beisel K.W."/>
            <person name="Bersano T."/>
            <person name="Bono H."/>
            <person name="Chalk A.M."/>
            <person name="Chiu K.P."/>
            <person name="Choudhary V."/>
            <person name="Christoffels A."/>
            <person name="Clutterbuck D.R."/>
            <person name="Crowe M.L."/>
            <person name="Dalla E."/>
            <person name="Dalrymple B.P."/>
            <person name="de Bono B."/>
            <person name="Della Gatta G."/>
            <person name="di Bernardo D."/>
            <person name="Down T."/>
            <person name="Engstrom P."/>
            <person name="Fagiolini M."/>
            <person name="Faulkner G."/>
            <person name="Fletcher C.F."/>
            <person name="Fukushima T."/>
            <person name="Furuno M."/>
            <person name="Futaki S."/>
            <person name="Gariboldi M."/>
            <person name="Georgii-Hemming P."/>
            <person name="Gingeras T.R."/>
            <person name="Gojobori T."/>
            <person name="Green R.E."/>
            <person name="Gustincich S."/>
            <person name="Harbers M."/>
            <person name="Hayashi Y."/>
            <person name="Hensch T.K."/>
            <person name="Hirokawa N."/>
            <person name="Hill D."/>
            <person name="Huminiecki L."/>
            <person name="Iacono M."/>
            <person name="Ikeo K."/>
            <person name="Iwama A."/>
            <person name="Ishikawa T."/>
            <person name="Jakt M."/>
            <person name="Kanapin A."/>
            <person name="Katoh M."/>
            <person name="Kawasawa Y."/>
            <person name="Kelso J."/>
            <person name="Kitamura H."/>
            <person name="Kitano H."/>
            <person name="Kollias G."/>
            <person name="Krishnan S.P."/>
            <person name="Kruger A."/>
            <person name="Kummerfeld S.K."/>
            <person name="Kurochkin I.V."/>
            <person name="Lareau L.F."/>
            <person name="Lazarevic D."/>
            <person name="Lipovich L."/>
            <person name="Liu J."/>
            <person name="Liuni S."/>
            <person name="McWilliam S."/>
            <person name="Madan Babu M."/>
            <person name="Madera M."/>
            <person name="Marchionni L."/>
            <person name="Matsuda H."/>
            <person name="Matsuzawa S."/>
            <person name="Miki H."/>
            <person name="Mignone F."/>
            <person name="Miyake S."/>
            <person name="Morris K."/>
            <person name="Mottagui-Tabar S."/>
            <person name="Mulder N."/>
            <person name="Nakano N."/>
            <person name="Nakauchi H."/>
            <person name="Ng P."/>
            <person name="Nilsson R."/>
            <person name="Nishiguchi S."/>
            <person name="Nishikawa S."/>
            <person name="Nori F."/>
            <person name="Ohara O."/>
            <person name="Okazaki Y."/>
            <person name="Orlando V."/>
            <person name="Pang K.C."/>
            <person name="Pavan W.J."/>
            <person name="Pavesi G."/>
            <person name="Pesole G."/>
            <person name="Petrovsky N."/>
            <person name="Piazza S."/>
            <person name="Reed J."/>
            <person name="Reid J.F."/>
            <person name="Ring B.Z."/>
            <person name="Ringwald M."/>
            <person name="Rost B."/>
            <person name="Ruan Y."/>
            <person name="Salzberg S.L."/>
            <person name="Sandelin A."/>
            <person name="Schneider C."/>
            <person name="Schoenbach C."/>
            <person name="Sekiguchi K."/>
            <person name="Semple C.A."/>
            <person name="Seno S."/>
            <person name="Sessa L."/>
            <person name="Sheng Y."/>
            <person name="Shibata Y."/>
            <person name="Shimada H."/>
            <person name="Shimada K."/>
            <person name="Silva D."/>
            <person name="Sinclair B."/>
            <person name="Sperling S."/>
            <person name="Stupka E."/>
            <person name="Sugiura K."/>
            <person name="Sultana R."/>
            <person name="Takenaka Y."/>
            <person name="Taki K."/>
            <person name="Tammoja K."/>
            <person name="Tan S.L."/>
            <person name="Tang S."/>
            <person name="Taylor M.S."/>
            <person name="Tegner J."/>
            <person name="Teichmann S.A."/>
            <person name="Ueda H.R."/>
            <person name="van Nimwegen E."/>
            <person name="Verardo R."/>
            <person name="Wei C.L."/>
            <person name="Yagi K."/>
            <person name="Yamanishi H."/>
            <person name="Zabarovsky E."/>
            <person name="Zhu S."/>
            <person name="Zimmer A."/>
            <person name="Hide W."/>
            <person name="Bult C."/>
            <person name="Grimmond S.M."/>
            <person name="Teasdale R.D."/>
            <person name="Liu E.T."/>
            <person name="Brusic V."/>
            <person name="Quackenbush J."/>
            <person name="Wahlestedt C."/>
            <person name="Mattick J.S."/>
            <person name="Hume D.A."/>
            <person name="Kai C."/>
            <person name="Sasaki D."/>
            <person name="Tomaru Y."/>
            <person name="Fukuda S."/>
            <person name="Kanamori-Katayama M."/>
            <person name="Suzuki M."/>
            <person name="Aoki J."/>
            <person name="Arakawa T."/>
            <person name="Iida J."/>
            <person name="Imamura K."/>
            <person name="Itoh M."/>
            <person name="Kato T."/>
            <person name="Kawaji H."/>
            <person name="Kawagashira N."/>
            <person name="Kawashima T."/>
            <person name="Kojima M."/>
            <person name="Kondo S."/>
            <person name="Konno H."/>
            <person name="Nakano K."/>
            <person name="Ninomiya N."/>
            <person name="Nishio T."/>
            <person name="Okada M."/>
            <person name="Plessy C."/>
            <person name="Shibata K."/>
            <person name="Shiraki T."/>
            <person name="Suzuki S."/>
            <person name="Tagami M."/>
            <person name="Waki K."/>
            <person name="Watahiki A."/>
            <person name="Okamura-Oho Y."/>
            <person name="Suzuki H."/>
            <person name="Kawai J."/>
            <person name="Hayashizaki Y."/>
        </authorList>
    </citation>
    <scope>NUCLEOTIDE SEQUENCE [LARGE SCALE MRNA]</scope>
    <source>
        <strain>C57BL/6J</strain>
        <tissue>Head</tissue>
    </source>
</reference>
<reference key="2">
    <citation type="submission" date="2005-07" db="EMBL/GenBank/DDBJ databases">
        <authorList>
            <person name="Mural R.J."/>
            <person name="Adams M.D."/>
            <person name="Myers E.W."/>
            <person name="Smith H.O."/>
            <person name="Venter J.C."/>
        </authorList>
    </citation>
    <scope>NUCLEOTIDE SEQUENCE [LARGE SCALE GENOMIC DNA]</scope>
</reference>
<reference key="3">
    <citation type="journal article" date="2004" name="Genome Res.">
        <title>The status, quality, and expansion of the NIH full-length cDNA project: the Mammalian Gene Collection (MGC).</title>
        <authorList>
            <consortium name="The MGC Project Team"/>
        </authorList>
    </citation>
    <scope>NUCLEOTIDE SEQUENCE [LARGE SCALE MRNA]</scope>
</reference>
<reference key="4">
    <citation type="journal article" date="2004" name="Gene Expr. Patterns">
        <title>Bono1: a gene associated with regions of deposition of bone and dentine.</title>
        <authorList>
            <person name="James M.J."/>
            <person name="Jaervinen E."/>
            <person name="Thesleff I."/>
        </authorList>
    </citation>
    <scope>TISSUE SPECIFICITY</scope>
    <scope>DEVELOPMENTAL STAGE</scope>
</reference>
<reference key="5">
    <citation type="journal article" date="2004" name="Biochem. Biophys. Res. Commun.">
        <title>Role of a new member of IGFBP superfamily, IGFBP-rP10, in proliferation and differentiation of osteoblastic cells.</title>
        <authorList>
            <person name="Shibata Y."/>
            <person name="Tsukazaki T."/>
            <person name="Hirata K."/>
            <person name="Xin C."/>
            <person name="Yamaguchi A."/>
        </authorList>
    </citation>
    <scope>FUNCTION</scope>
    <scope>TISSUE SPECIFICITY</scope>
    <scope>INDUCTION</scope>
</reference>
<reference key="6">
    <citation type="journal article" date="2008" name="Proc. Natl. Acad. Sci. U.S.A.">
        <title>Transcriptome-based systematic identification of extracellular matrix proteins.</title>
        <authorList>
            <person name="Manabe R."/>
            <person name="Tsutsui K."/>
            <person name="Yamada T."/>
            <person name="Kimura M."/>
            <person name="Nakano I."/>
            <person name="Shimono C."/>
            <person name="Sanzen N."/>
            <person name="Furutani Y."/>
            <person name="Fukuda T."/>
            <person name="Oguri Y."/>
            <person name="Shimamoto K."/>
            <person name="Kiyozumi D."/>
            <person name="Sato Y."/>
            <person name="Sado Y."/>
            <person name="Senoo H."/>
            <person name="Yamashina S."/>
            <person name="Fukuda S."/>
            <person name="Kawai J."/>
            <person name="Sugiura N."/>
            <person name="Kimata K."/>
            <person name="Hayashizaki Y."/>
            <person name="Sekiguchi K."/>
        </authorList>
    </citation>
    <scope>FUNCTION</scope>
    <scope>SUBCELLULAR LOCATION</scope>
    <scope>DEVELOPMENTAL STAGE</scope>
</reference>
<organism>
    <name type="scientific">Mus musculus</name>
    <name type="common">Mouse</name>
    <dbReference type="NCBI Taxonomy" id="10090"/>
    <lineage>
        <taxon>Eukaryota</taxon>
        <taxon>Metazoa</taxon>
        <taxon>Chordata</taxon>
        <taxon>Craniata</taxon>
        <taxon>Vertebrata</taxon>
        <taxon>Euteleostomi</taxon>
        <taxon>Mammalia</taxon>
        <taxon>Eutheria</taxon>
        <taxon>Euarchontoglires</taxon>
        <taxon>Glires</taxon>
        <taxon>Rodentia</taxon>
        <taxon>Myomorpha</taxon>
        <taxon>Muroidea</taxon>
        <taxon>Muridae</taxon>
        <taxon>Murinae</taxon>
        <taxon>Mus</taxon>
        <taxon>Mus</taxon>
    </lineage>
</organism>
<dbReference type="EMBL" id="AK030678">
    <property type="protein sequence ID" value="BAC27075.1"/>
    <property type="molecule type" value="mRNA"/>
</dbReference>
<dbReference type="EMBL" id="CH466534">
    <property type="protein sequence ID" value="EDL41948.1"/>
    <property type="molecule type" value="Genomic_DNA"/>
</dbReference>
<dbReference type="EMBL" id="BC115642">
    <property type="protein sequence ID" value="AAI15643.1"/>
    <property type="molecule type" value="mRNA"/>
</dbReference>
<dbReference type="CCDS" id="CCDS29857.1"/>
<dbReference type="RefSeq" id="NP_001349327.1">
    <property type="nucleotide sequence ID" value="NM_001362398.1"/>
</dbReference>
<dbReference type="RefSeq" id="NP_849260.2">
    <property type="nucleotide sequence ID" value="NM_178929.5"/>
</dbReference>
<dbReference type="RefSeq" id="XP_006526629.1">
    <property type="nucleotide sequence ID" value="XM_006526566.3"/>
</dbReference>
<dbReference type="RefSeq" id="XP_006526630.1">
    <property type="nucleotide sequence ID" value="XM_006526567.4"/>
</dbReference>
<dbReference type="RefSeq" id="XP_006526631.1">
    <property type="nucleotide sequence ID" value="XM_006526568.2"/>
</dbReference>
<dbReference type="RefSeq" id="XP_017173531.1">
    <property type="nucleotide sequence ID" value="XM_017318042.2"/>
</dbReference>
<dbReference type="RefSeq" id="XP_030106546.1">
    <property type="nucleotide sequence ID" value="XM_030250686.2"/>
</dbReference>
<dbReference type="SMR" id="Q8BJ66"/>
<dbReference type="FunCoup" id="Q8BJ66">
    <property type="interactions" value="146"/>
</dbReference>
<dbReference type="STRING" id="10090.ENSMUSP00000107579"/>
<dbReference type="GlyCosmos" id="Q8BJ66">
    <property type="glycosylation" value="3 sites, No reported glycans"/>
</dbReference>
<dbReference type="GlyGen" id="Q8BJ66">
    <property type="glycosylation" value="3 sites, 1 N-linked glycan (1 site)"/>
</dbReference>
<dbReference type="jPOST" id="Q8BJ66"/>
<dbReference type="PaxDb" id="10090-ENSMUSP00000107579"/>
<dbReference type="ProteomicsDB" id="269181"/>
<dbReference type="Antibodypedia" id="1720">
    <property type="antibodies" value="58 antibodies from 16 providers"/>
</dbReference>
<dbReference type="DNASU" id="107250"/>
<dbReference type="Ensembl" id="ENSMUST00000026234.5">
    <property type="protein sequence ID" value="ENSMUSP00000026234.5"/>
    <property type="gene ID" value="ENSMUSG00000025213.12"/>
</dbReference>
<dbReference type="Ensembl" id="ENSMUST00000111948.8">
    <property type="protein sequence ID" value="ENSMUSP00000107579.2"/>
    <property type="gene ID" value="ENSMUSG00000025213.12"/>
</dbReference>
<dbReference type="GeneID" id="107250"/>
<dbReference type="KEGG" id="mmu:107250"/>
<dbReference type="UCSC" id="uc008hqs.2">
    <property type="organism name" value="mouse"/>
</dbReference>
<dbReference type="AGR" id="MGI:2147606"/>
<dbReference type="CTD" id="81621"/>
<dbReference type="MGI" id="MGI:2147606">
    <property type="gene designation" value="Kazald1"/>
</dbReference>
<dbReference type="VEuPathDB" id="HostDB:ENSMUSG00000025213"/>
<dbReference type="eggNOG" id="ENOG502R5QG">
    <property type="taxonomic scope" value="Eukaryota"/>
</dbReference>
<dbReference type="GeneTree" id="ENSGT00530000063555"/>
<dbReference type="HOGENOM" id="CLU_075590_1_0_1"/>
<dbReference type="InParanoid" id="Q8BJ66"/>
<dbReference type="OMA" id="TWNITGQ"/>
<dbReference type="OrthoDB" id="10029006at2759"/>
<dbReference type="PhylomeDB" id="Q8BJ66"/>
<dbReference type="TreeFam" id="TF331645"/>
<dbReference type="BioGRID-ORCS" id="107250">
    <property type="hits" value="0 hits in 76 CRISPR screens"/>
</dbReference>
<dbReference type="PRO" id="PR:Q8BJ66"/>
<dbReference type="Proteomes" id="UP000000589">
    <property type="component" value="Chromosome 19"/>
</dbReference>
<dbReference type="RNAct" id="Q8BJ66">
    <property type="molecule type" value="protein"/>
</dbReference>
<dbReference type="Bgee" id="ENSMUSG00000025213">
    <property type="expression patterns" value="Expressed in epithelium of cochlear duct and 156 other cell types or tissues"/>
</dbReference>
<dbReference type="GO" id="GO:0031012">
    <property type="term" value="C:extracellular matrix"/>
    <property type="evidence" value="ECO:0000314"/>
    <property type="project" value="MGI"/>
</dbReference>
<dbReference type="GO" id="GO:0005576">
    <property type="term" value="C:extracellular region"/>
    <property type="evidence" value="ECO:0007669"/>
    <property type="project" value="UniProtKB-KW"/>
</dbReference>
<dbReference type="GO" id="GO:0005614">
    <property type="term" value="C:interstitial matrix"/>
    <property type="evidence" value="ECO:0000314"/>
    <property type="project" value="MGI"/>
</dbReference>
<dbReference type="GO" id="GO:0005520">
    <property type="term" value="F:insulin-like growth factor binding"/>
    <property type="evidence" value="ECO:0007669"/>
    <property type="project" value="InterPro"/>
</dbReference>
<dbReference type="GO" id="GO:0030154">
    <property type="term" value="P:cell differentiation"/>
    <property type="evidence" value="ECO:0007669"/>
    <property type="project" value="UniProtKB-KW"/>
</dbReference>
<dbReference type="GO" id="GO:0030198">
    <property type="term" value="P:extracellular matrix organization"/>
    <property type="evidence" value="ECO:0000314"/>
    <property type="project" value="MGI"/>
</dbReference>
<dbReference type="GO" id="GO:0001503">
    <property type="term" value="P:ossification"/>
    <property type="evidence" value="ECO:0007669"/>
    <property type="project" value="UniProtKB-KW"/>
</dbReference>
<dbReference type="GO" id="GO:0001558">
    <property type="term" value="P:regulation of cell growth"/>
    <property type="evidence" value="ECO:0007669"/>
    <property type="project" value="InterPro"/>
</dbReference>
<dbReference type="CDD" id="cd00104">
    <property type="entry name" value="KAZAL_FS"/>
    <property type="match status" value="1"/>
</dbReference>
<dbReference type="FunFam" id="2.60.40.10:FF:003005">
    <property type="entry name" value="Kazal-type serine protease inhibitor domain-containing protein 1"/>
    <property type="match status" value="1"/>
</dbReference>
<dbReference type="Gene3D" id="3.30.60.30">
    <property type="match status" value="1"/>
</dbReference>
<dbReference type="Gene3D" id="4.10.40.20">
    <property type="match status" value="1"/>
</dbReference>
<dbReference type="Gene3D" id="2.60.40.10">
    <property type="entry name" value="Immunoglobulins"/>
    <property type="match status" value="1"/>
</dbReference>
<dbReference type="InterPro" id="IPR009030">
    <property type="entry name" value="Growth_fac_rcpt_cys_sf"/>
</dbReference>
<dbReference type="InterPro" id="IPR007110">
    <property type="entry name" value="Ig-like_dom"/>
</dbReference>
<dbReference type="InterPro" id="IPR036179">
    <property type="entry name" value="Ig-like_dom_sf"/>
</dbReference>
<dbReference type="InterPro" id="IPR013783">
    <property type="entry name" value="Ig-like_fold"/>
</dbReference>
<dbReference type="InterPro" id="IPR013098">
    <property type="entry name" value="Ig_I-set"/>
</dbReference>
<dbReference type="InterPro" id="IPR003599">
    <property type="entry name" value="Ig_sub"/>
</dbReference>
<dbReference type="InterPro" id="IPR003598">
    <property type="entry name" value="Ig_sub2"/>
</dbReference>
<dbReference type="InterPro" id="IPR000867">
    <property type="entry name" value="IGFBP-like"/>
</dbReference>
<dbReference type="InterPro" id="IPR011390">
    <property type="entry name" value="IGFBP_rP_mac25"/>
</dbReference>
<dbReference type="InterPro" id="IPR002350">
    <property type="entry name" value="Kazal_dom"/>
</dbReference>
<dbReference type="InterPro" id="IPR036058">
    <property type="entry name" value="Kazal_dom_sf"/>
</dbReference>
<dbReference type="PANTHER" id="PTHR14186">
    <property type="entry name" value="INSULIN-LIKE GROWTH FACTOR BINDING PROTEIN-RELATED"/>
    <property type="match status" value="1"/>
</dbReference>
<dbReference type="PANTHER" id="PTHR14186:SF21">
    <property type="entry name" value="KAZAL-TYPE SERINE PROTEASE INHIBITOR DOMAIN-CONTAINING PROTEIN 1"/>
    <property type="match status" value="1"/>
</dbReference>
<dbReference type="Pfam" id="PF07679">
    <property type="entry name" value="I-set"/>
    <property type="match status" value="1"/>
</dbReference>
<dbReference type="Pfam" id="PF00219">
    <property type="entry name" value="IGFBP"/>
    <property type="match status" value="1"/>
</dbReference>
<dbReference type="Pfam" id="PF07648">
    <property type="entry name" value="Kazal_2"/>
    <property type="match status" value="1"/>
</dbReference>
<dbReference type="PIRSF" id="PIRSF018239">
    <property type="entry name" value="IGFBP_rP_mac25"/>
    <property type="match status" value="1"/>
</dbReference>
<dbReference type="SMART" id="SM00409">
    <property type="entry name" value="IG"/>
    <property type="match status" value="1"/>
</dbReference>
<dbReference type="SMART" id="SM00408">
    <property type="entry name" value="IGc2"/>
    <property type="match status" value="1"/>
</dbReference>
<dbReference type="SMART" id="SM00280">
    <property type="entry name" value="KAZAL"/>
    <property type="match status" value="1"/>
</dbReference>
<dbReference type="SUPFAM" id="SSF57184">
    <property type="entry name" value="Growth factor receptor domain"/>
    <property type="match status" value="1"/>
</dbReference>
<dbReference type="SUPFAM" id="SSF48726">
    <property type="entry name" value="Immunoglobulin"/>
    <property type="match status" value="1"/>
</dbReference>
<dbReference type="SUPFAM" id="SSF100895">
    <property type="entry name" value="Kazal-type serine protease inhibitors"/>
    <property type="match status" value="1"/>
</dbReference>
<dbReference type="PROSITE" id="PS50835">
    <property type="entry name" value="IG_LIKE"/>
    <property type="match status" value="1"/>
</dbReference>
<dbReference type="PROSITE" id="PS51323">
    <property type="entry name" value="IGFBP_N_2"/>
    <property type="match status" value="1"/>
</dbReference>
<dbReference type="PROSITE" id="PS51465">
    <property type="entry name" value="KAZAL_2"/>
    <property type="match status" value="1"/>
</dbReference>
<keyword id="KW-0217">Developmental protein</keyword>
<keyword id="KW-0221">Differentiation</keyword>
<keyword id="KW-1015">Disulfide bond</keyword>
<keyword id="KW-0272">Extracellular matrix</keyword>
<keyword id="KW-0325">Glycoprotein</keyword>
<keyword id="KW-0393">Immunoglobulin domain</keyword>
<keyword id="KW-0892">Osteogenesis</keyword>
<keyword id="KW-1185">Reference proteome</keyword>
<keyword id="KW-0964">Secreted</keyword>
<keyword id="KW-0732">Signal</keyword>
<proteinExistence type="evidence at protein level"/>
<sequence length="313" mass="34272">MPRVFTGLPANYAAPTLALSLLLPLLLVVWTQLPVSARPSTGPDYLRRGWLRLLAEGEGCAPCRPEECAAPRGCLAGRVRDACGCCWECANLEGQLCDLDPSANFYGRCGEQLECRLDAGGDLSRGEVPEPLCVCRSQRPLCGSDGRTYAQICRLQEAARARLDANLTVVHPGPCESEPQILSQPHNIWNVTGQDVIFGCEVFAYPMASIEWRKDGLDIQLPGDDPHISVQFRGGPQKFEVTGWLQIQALRPSDEGTYRCLARNALGQAEASATLTVLTPEQLNATGFSQLQSRSLFPEEEEEAESEELGDYY</sequence>
<feature type="signal peptide" evidence="1">
    <location>
        <begin position="1"/>
        <end position="37"/>
    </location>
</feature>
<feature type="chain" id="PRO_0000015077" description="Kazal-type serine protease inhibitor domain-containing protein 1">
    <location>
        <begin position="38"/>
        <end position="313"/>
    </location>
</feature>
<feature type="domain" description="IGFBP N-terminal" evidence="3">
    <location>
        <begin position="56"/>
        <end position="136"/>
    </location>
</feature>
<feature type="domain" description="Kazal-like" evidence="4">
    <location>
        <begin position="127"/>
        <end position="177"/>
    </location>
</feature>
<feature type="domain" description="Ig-like C2-type">
    <location>
        <begin position="179"/>
        <end position="276"/>
    </location>
</feature>
<feature type="region of interest" description="Disordered" evidence="5">
    <location>
        <begin position="290"/>
        <end position="313"/>
    </location>
</feature>
<feature type="compositionally biased region" description="Acidic residues" evidence="5">
    <location>
        <begin position="298"/>
        <end position="313"/>
    </location>
</feature>
<feature type="glycosylation site" description="N-linked (GlcNAc...) asparagine" evidence="1">
    <location>
        <position position="166"/>
    </location>
</feature>
<feature type="glycosylation site" description="N-linked (GlcNAc...) asparagine" evidence="1">
    <location>
        <position position="190"/>
    </location>
</feature>
<feature type="glycosylation site" description="N-linked (GlcNAc...) asparagine" evidence="1">
    <location>
        <position position="284"/>
    </location>
</feature>
<feature type="disulfide bond" evidence="3">
    <location>
        <begin position="60"/>
        <end position="83"/>
    </location>
</feature>
<feature type="disulfide bond" evidence="3">
    <location>
        <begin position="63"/>
        <end position="85"/>
    </location>
</feature>
<feature type="disulfide bond" evidence="3">
    <location>
        <begin position="68"/>
        <end position="86"/>
    </location>
</feature>
<feature type="disulfide bond" evidence="3">
    <location>
        <begin position="74"/>
        <end position="89"/>
    </location>
</feature>
<feature type="disulfide bond" evidence="3">
    <location>
        <begin position="97"/>
        <end position="115"/>
    </location>
</feature>
<feature type="disulfide bond" evidence="3">
    <location>
        <begin position="109"/>
        <end position="133"/>
    </location>
</feature>
<feature type="disulfide bond" evidence="4">
    <location>
        <begin position="142"/>
        <end position="175"/>
    </location>
</feature>
<feature type="disulfide bond" evidence="2">
    <location>
        <begin position="200"/>
        <end position="260"/>
    </location>
</feature>
<feature type="sequence conflict" description="In Ref. 1; BAC27075." evidence="9" ref="1">
    <original>EE</original>
    <variation>KK</variation>
    <location>
        <begin position="66"/>
        <end position="67"/>
    </location>
</feature>
<accession>Q8BJ66</accession>
<accession>Q14BR9</accession>